<organism>
    <name type="scientific">Pseudomonas syringae pv. tomato (strain ATCC BAA-871 / DC3000)</name>
    <dbReference type="NCBI Taxonomy" id="223283"/>
    <lineage>
        <taxon>Bacteria</taxon>
        <taxon>Pseudomonadati</taxon>
        <taxon>Pseudomonadota</taxon>
        <taxon>Gammaproteobacteria</taxon>
        <taxon>Pseudomonadales</taxon>
        <taxon>Pseudomonadaceae</taxon>
        <taxon>Pseudomonas</taxon>
    </lineage>
</organism>
<accession>Q886P0</accession>
<keyword id="KW-0963">Cytoplasm</keyword>
<keyword id="KW-0648">Protein biosynthesis</keyword>
<keyword id="KW-1185">Reference proteome</keyword>
<reference key="1">
    <citation type="journal article" date="2003" name="Proc. Natl. Acad. Sci. U.S.A.">
        <title>The complete genome sequence of the Arabidopsis and tomato pathogen Pseudomonas syringae pv. tomato DC3000.</title>
        <authorList>
            <person name="Buell C.R."/>
            <person name="Joardar V."/>
            <person name="Lindeberg M."/>
            <person name="Selengut J."/>
            <person name="Paulsen I.T."/>
            <person name="Gwinn M.L."/>
            <person name="Dodson R.J."/>
            <person name="DeBoy R.T."/>
            <person name="Durkin A.S."/>
            <person name="Kolonay J.F."/>
            <person name="Madupu R."/>
            <person name="Daugherty S.C."/>
            <person name="Brinkac L.M."/>
            <person name="Beanan M.J."/>
            <person name="Haft D.H."/>
            <person name="Nelson W.C."/>
            <person name="Davidsen T.M."/>
            <person name="Zafar N."/>
            <person name="Zhou L."/>
            <person name="Liu J."/>
            <person name="Yuan Q."/>
            <person name="Khouri H.M."/>
            <person name="Fedorova N.B."/>
            <person name="Tran B."/>
            <person name="Russell D."/>
            <person name="Berry K.J."/>
            <person name="Utterback T.R."/>
            <person name="Van Aken S.E."/>
            <person name="Feldblyum T.V."/>
            <person name="D'Ascenzo M."/>
            <person name="Deng W.-L."/>
            <person name="Ramos A.R."/>
            <person name="Alfano J.R."/>
            <person name="Cartinhour S."/>
            <person name="Chatterjee A.K."/>
            <person name="Delaney T.P."/>
            <person name="Lazarowitz S.G."/>
            <person name="Martin G.B."/>
            <person name="Schneider D.J."/>
            <person name="Tang X."/>
            <person name="Bender C.L."/>
            <person name="White O."/>
            <person name="Fraser C.M."/>
            <person name="Collmer A."/>
        </authorList>
    </citation>
    <scope>NUCLEOTIDE SEQUENCE [LARGE SCALE GENOMIC DNA]</scope>
    <source>
        <strain>ATCC BAA-871 / DC3000</strain>
    </source>
</reference>
<comment type="function">
    <text evidence="1">Responsible for the release of ribosomes from messenger RNA at the termination of protein biosynthesis. May increase the efficiency of translation by recycling ribosomes from one round of translation to another.</text>
</comment>
<comment type="subcellular location">
    <subcellularLocation>
        <location evidence="1">Cytoplasm</location>
    </subcellularLocation>
</comment>
<comment type="similarity">
    <text evidence="1">Belongs to the RRF family.</text>
</comment>
<feature type="chain" id="PRO_0000167521" description="Ribosome-recycling factor">
    <location>
        <begin position="1"/>
        <end position="185"/>
    </location>
</feature>
<name>RRF_PSESM</name>
<sequence>MINEIKKDAQTRMQKSLESLTHAFTRIRTGKAHPSILGGVMVPYYGADTPLSQVANVTVKDSRTLQVVAFERNMLAAVDKAIQSSGLGFNPTNLGELLLISMPALTEETRKGFTKQARDAAEDARVAVRNIRRDALSQLKDLVKDKEISEDEERRAADDVQKLTDKFVADIEVAVKQKEADLMAV</sequence>
<protein>
    <recommendedName>
        <fullName evidence="1">Ribosome-recycling factor</fullName>
        <shortName evidence="1">RRF</shortName>
    </recommendedName>
    <alternativeName>
        <fullName evidence="1">Ribosome-releasing factor</fullName>
    </alternativeName>
</protein>
<evidence type="ECO:0000255" key="1">
    <source>
        <dbReference type="HAMAP-Rule" id="MF_00040"/>
    </source>
</evidence>
<proteinExistence type="inferred from homology"/>
<gene>
    <name evidence="1" type="primary">frr</name>
    <name type="ordered locus">PSPTO_1537</name>
</gene>
<dbReference type="EMBL" id="AE016853">
    <property type="protein sequence ID" value="AAO55057.1"/>
    <property type="molecule type" value="Genomic_DNA"/>
</dbReference>
<dbReference type="RefSeq" id="NP_791362.1">
    <property type="nucleotide sequence ID" value="NC_004578.1"/>
</dbReference>
<dbReference type="RefSeq" id="WP_005765982.1">
    <property type="nucleotide sequence ID" value="NC_004578.1"/>
</dbReference>
<dbReference type="SMR" id="Q886P0"/>
<dbReference type="STRING" id="223283.PSPTO_1537"/>
<dbReference type="GeneID" id="1183174"/>
<dbReference type="KEGG" id="pst:PSPTO_1537"/>
<dbReference type="PATRIC" id="fig|223283.9.peg.1563"/>
<dbReference type="eggNOG" id="COG0233">
    <property type="taxonomic scope" value="Bacteria"/>
</dbReference>
<dbReference type="HOGENOM" id="CLU_073981_2_1_6"/>
<dbReference type="OrthoDB" id="9804006at2"/>
<dbReference type="PhylomeDB" id="Q886P0"/>
<dbReference type="Proteomes" id="UP000002515">
    <property type="component" value="Chromosome"/>
</dbReference>
<dbReference type="GO" id="GO:0005829">
    <property type="term" value="C:cytosol"/>
    <property type="evidence" value="ECO:0007669"/>
    <property type="project" value="GOC"/>
</dbReference>
<dbReference type="GO" id="GO:0043023">
    <property type="term" value="F:ribosomal large subunit binding"/>
    <property type="evidence" value="ECO:0007669"/>
    <property type="project" value="TreeGrafter"/>
</dbReference>
<dbReference type="GO" id="GO:0002184">
    <property type="term" value="P:cytoplasmic translational termination"/>
    <property type="evidence" value="ECO:0007669"/>
    <property type="project" value="TreeGrafter"/>
</dbReference>
<dbReference type="CDD" id="cd00520">
    <property type="entry name" value="RRF"/>
    <property type="match status" value="1"/>
</dbReference>
<dbReference type="FunFam" id="1.10.132.20:FF:000001">
    <property type="entry name" value="Ribosome-recycling factor"/>
    <property type="match status" value="1"/>
</dbReference>
<dbReference type="FunFam" id="3.30.1360.40:FF:000001">
    <property type="entry name" value="Ribosome-recycling factor"/>
    <property type="match status" value="1"/>
</dbReference>
<dbReference type="Gene3D" id="3.30.1360.40">
    <property type="match status" value="1"/>
</dbReference>
<dbReference type="Gene3D" id="1.10.132.20">
    <property type="entry name" value="Ribosome-recycling factor"/>
    <property type="match status" value="1"/>
</dbReference>
<dbReference type="HAMAP" id="MF_00040">
    <property type="entry name" value="RRF"/>
    <property type="match status" value="1"/>
</dbReference>
<dbReference type="InterPro" id="IPR002661">
    <property type="entry name" value="Ribosome_recyc_fac"/>
</dbReference>
<dbReference type="InterPro" id="IPR023584">
    <property type="entry name" value="Ribosome_recyc_fac_dom"/>
</dbReference>
<dbReference type="InterPro" id="IPR036191">
    <property type="entry name" value="RRF_sf"/>
</dbReference>
<dbReference type="NCBIfam" id="TIGR00496">
    <property type="entry name" value="frr"/>
    <property type="match status" value="1"/>
</dbReference>
<dbReference type="PANTHER" id="PTHR20982:SF3">
    <property type="entry name" value="MITOCHONDRIAL RIBOSOME RECYCLING FACTOR PSEUDO 1"/>
    <property type="match status" value="1"/>
</dbReference>
<dbReference type="PANTHER" id="PTHR20982">
    <property type="entry name" value="RIBOSOME RECYCLING FACTOR"/>
    <property type="match status" value="1"/>
</dbReference>
<dbReference type="Pfam" id="PF01765">
    <property type="entry name" value="RRF"/>
    <property type="match status" value="1"/>
</dbReference>
<dbReference type="SUPFAM" id="SSF55194">
    <property type="entry name" value="Ribosome recycling factor, RRF"/>
    <property type="match status" value="1"/>
</dbReference>